<proteinExistence type="inferred from homology"/>
<keyword id="KW-0066">ATP synthesis</keyword>
<keyword id="KW-0997">Cell inner membrane</keyword>
<keyword id="KW-1003">Cell membrane</keyword>
<keyword id="KW-0139">CF(1)</keyword>
<keyword id="KW-0375">Hydrogen ion transport</keyword>
<keyword id="KW-0406">Ion transport</keyword>
<keyword id="KW-0472">Membrane</keyword>
<keyword id="KW-1185">Reference proteome</keyword>
<keyword id="KW-0813">Transport</keyword>
<comment type="function">
    <text evidence="1">Produces ATP from ADP in the presence of a proton gradient across the membrane.</text>
</comment>
<comment type="subunit">
    <text>F-type ATPases have 2 components, CF(1) - the catalytic core - and CF(0) - the membrane proton channel. CF(1) has five subunits: alpha(3), beta(3), gamma(1), delta(1), epsilon(1). CF(0) has three main subunits: a, b and c.</text>
</comment>
<comment type="subcellular location">
    <subcellularLocation>
        <location evidence="1">Cell inner membrane</location>
        <topology evidence="1">Peripheral membrane protein</topology>
    </subcellularLocation>
</comment>
<comment type="similarity">
    <text evidence="1">Belongs to the ATPase epsilon chain family.</text>
</comment>
<gene>
    <name evidence="1" type="primary">atpC</name>
    <name type="ordered locus">AZOSEA16970</name>
    <name type="ORF">ebA3008</name>
</gene>
<protein>
    <recommendedName>
        <fullName evidence="1">ATP synthase epsilon chain</fullName>
    </recommendedName>
    <alternativeName>
        <fullName evidence="1">ATP synthase F1 sector epsilon subunit</fullName>
    </alternativeName>
    <alternativeName>
        <fullName evidence="1">F-ATPase epsilon subunit</fullName>
    </alternativeName>
</protein>
<dbReference type="EMBL" id="CR555306">
    <property type="protein sequence ID" value="CAI07822.1"/>
    <property type="molecule type" value="Genomic_DNA"/>
</dbReference>
<dbReference type="RefSeq" id="WP_011237536.1">
    <property type="nucleotide sequence ID" value="NC_006513.1"/>
</dbReference>
<dbReference type="SMR" id="Q5P4E1"/>
<dbReference type="STRING" id="76114.ebA3008"/>
<dbReference type="KEGG" id="eba:ebA3008"/>
<dbReference type="eggNOG" id="COG0355">
    <property type="taxonomic scope" value="Bacteria"/>
</dbReference>
<dbReference type="HOGENOM" id="CLU_084338_2_0_4"/>
<dbReference type="OrthoDB" id="9791445at2"/>
<dbReference type="Proteomes" id="UP000006552">
    <property type="component" value="Chromosome"/>
</dbReference>
<dbReference type="GO" id="GO:0005886">
    <property type="term" value="C:plasma membrane"/>
    <property type="evidence" value="ECO:0007669"/>
    <property type="project" value="UniProtKB-SubCell"/>
</dbReference>
<dbReference type="GO" id="GO:0045259">
    <property type="term" value="C:proton-transporting ATP synthase complex"/>
    <property type="evidence" value="ECO:0007669"/>
    <property type="project" value="UniProtKB-KW"/>
</dbReference>
<dbReference type="GO" id="GO:0005524">
    <property type="term" value="F:ATP binding"/>
    <property type="evidence" value="ECO:0007669"/>
    <property type="project" value="UniProtKB-UniRule"/>
</dbReference>
<dbReference type="GO" id="GO:0046933">
    <property type="term" value="F:proton-transporting ATP synthase activity, rotational mechanism"/>
    <property type="evidence" value="ECO:0007669"/>
    <property type="project" value="UniProtKB-UniRule"/>
</dbReference>
<dbReference type="CDD" id="cd12152">
    <property type="entry name" value="F1-ATPase_delta"/>
    <property type="match status" value="1"/>
</dbReference>
<dbReference type="FunFam" id="1.20.5.440:FF:000001">
    <property type="entry name" value="ATP synthase epsilon chain"/>
    <property type="match status" value="1"/>
</dbReference>
<dbReference type="FunFam" id="2.60.15.10:FF:000001">
    <property type="entry name" value="ATP synthase epsilon chain"/>
    <property type="match status" value="1"/>
</dbReference>
<dbReference type="Gene3D" id="1.20.5.440">
    <property type="entry name" value="ATP synthase delta/epsilon subunit, C-terminal domain"/>
    <property type="match status" value="1"/>
</dbReference>
<dbReference type="Gene3D" id="2.60.15.10">
    <property type="entry name" value="F0F1 ATP synthase delta/epsilon subunit, N-terminal"/>
    <property type="match status" value="1"/>
</dbReference>
<dbReference type="HAMAP" id="MF_00530">
    <property type="entry name" value="ATP_synth_epsil_bac"/>
    <property type="match status" value="1"/>
</dbReference>
<dbReference type="InterPro" id="IPR036794">
    <property type="entry name" value="ATP_F1_dsu/esu_C_sf"/>
</dbReference>
<dbReference type="InterPro" id="IPR001469">
    <property type="entry name" value="ATP_synth_F1_dsu/esu"/>
</dbReference>
<dbReference type="InterPro" id="IPR020546">
    <property type="entry name" value="ATP_synth_F1_dsu/esu_N"/>
</dbReference>
<dbReference type="InterPro" id="IPR020547">
    <property type="entry name" value="ATP_synth_F1_esu_C"/>
</dbReference>
<dbReference type="InterPro" id="IPR036771">
    <property type="entry name" value="ATPsynth_dsu/esu_N"/>
</dbReference>
<dbReference type="NCBIfam" id="TIGR01216">
    <property type="entry name" value="ATP_synt_epsi"/>
    <property type="match status" value="1"/>
</dbReference>
<dbReference type="NCBIfam" id="NF001847">
    <property type="entry name" value="PRK00571.1-4"/>
    <property type="match status" value="1"/>
</dbReference>
<dbReference type="PANTHER" id="PTHR13822">
    <property type="entry name" value="ATP SYNTHASE DELTA/EPSILON CHAIN"/>
    <property type="match status" value="1"/>
</dbReference>
<dbReference type="PANTHER" id="PTHR13822:SF10">
    <property type="entry name" value="ATP SYNTHASE EPSILON CHAIN, CHLOROPLASTIC"/>
    <property type="match status" value="1"/>
</dbReference>
<dbReference type="Pfam" id="PF00401">
    <property type="entry name" value="ATP-synt_DE"/>
    <property type="match status" value="1"/>
</dbReference>
<dbReference type="Pfam" id="PF02823">
    <property type="entry name" value="ATP-synt_DE_N"/>
    <property type="match status" value="1"/>
</dbReference>
<dbReference type="SUPFAM" id="SSF46604">
    <property type="entry name" value="Epsilon subunit of F1F0-ATP synthase C-terminal domain"/>
    <property type="match status" value="1"/>
</dbReference>
<dbReference type="SUPFAM" id="SSF51344">
    <property type="entry name" value="Epsilon subunit of F1F0-ATP synthase N-terminal domain"/>
    <property type="match status" value="1"/>
</dbReference>
<accession>Q5P4E1</accession>
<sequence length="141" mass="15104">MAMTVHVDIVSAEEQIFSGLAEFVALPGEAGELGILPGHMPLMTRIKPGAVRVKRPDQAEEELVFVAGGILEVQPGLVTVLADTAIRGKDLDEAKALEAKRIAEEALKNQSTEIDYAKAQAELAEAIAQIAAIQKLRKRGH</sequence>
<feature type="chain" id="PRO_0000265784" description="ATP synthase epsilon chain">
    <location>
        <begin position="1"/>
        <end position="141"/>
    </location>
</feature>
<name>ATPE_AROAE</name>
<evidence type="ECO:0000255" key="1">
    <source>
        <dbReference type="HAMAP-Rule" id="MF_00530"/>
    </source>
</evidence>
<reference key="1">
    <citation type="journal article" date="2005" name="Arch. Microbiol.">
        <title>The genome sequence of an anaerobic aromatic-degrading denitrifying bacterium, strain EbN1.</title>
        <authorList>
            <person name="Rabus R."/>
            <person name="Kube M."/>
            <person name="Heider J."/>
            <person name="Beck A."/>
            <person name="Heitmann K."/>
            <person name="Widdel F."/>
            <person name="Reinhardt R."/>
        </authorList>
    </citation>
    <scope>NUCLEOTIDE SEQUENCE [LARGE SCALE GENOMIC DNA]</scope>
    <source>
        <strain>DSM 19018 / LMG 30748 / EbN1</strain>
    </source>
</reference>
<organism>
    <name type="scientific">Aromatoleum aromaticum (strain DSM 19018 / LMG 30748 / EbN1)</name>
    <name type="common">Azoarcus sp. (strain EbN1)</name>
    <dbReference type="NCBI Taxonomy" id="76114"/>
    <lineage>
        <taxon>Bacteria</taxon>
        <taxon>Pseudomonadati</taxon>
        <taxon>Pseudomonadota</taxon>
        <taxon>Betaproteobacteria</taxon>
        <taxon>Rhodocyclales</taxon>
        <taxon>Rhodocyclaceae</taxon>
        <taxon>Aromatoleum</taxon>
    </lineage>
</organism>